<comment type="function">
    <text evidence="1">Bidirectionally degrades single-stranded DNA into large acid-insoluble oligonucleotides, which are then degraded further into small acid-soluble oligonucleotides.</text>
</comment>
<comment type="catalytic activity">
    <reaction evidence="1">
        <text>Exonucleolytic cleavage in either 5'- to 3'- or 3'- to 5'-direction to yield nucleoside 5'-phosphates.</text>
        <dbReference type="EC" id="3.1.11.6"/>
    </reaction>
</comment>
<comment type="subunit">
    <text evidence="1">Heterooligomer composed of large and small subunits.</text>
</comment>
<comment type="subcellular location">
    <subcellularLocation>
        <location evidence="1">Cytoplasm</location>
    </subcellularLocation>
</comment>
<comment type="similarity">
    <text evidence="1">Belongs to the XseB family.</text>
</comment>
<evidence type="ECO:0000255" key="1">
    <source>
        <dbReference type="HAMAP-Rule" id="MF_00337"/>
    </source>
</evidence>
<proteinExistence type="inferred from homology"/>
<feature type="chain" id="PRO_0000303717" description="Exodeoxyribonuclease 7 small subunit">
    <location>
        <begin position="1"/>
        <end position="76"/>
    </location>
</feature>
<organism>
    <name type="scientific">Latilactobacillus sakei subsp. sakei (strain 23K)</name>
    <name type="common">Lactobacillus sakei subsp. sakei</name>
    <dbReference type="NCBI Taxonomy" id="314315"/>
    <lineage>
        <taxon>Bacteria</taxon>
        <taxon>Bacillati</taxon>
        <taxon>Bacillota</taxon>
        <taxon>Bacilli</taxon>
        <taxon>Lactobacillales</taxon>
        <taxon>Lactobacillaceae</taxon>
        <taxon>Latilactobacillus</taxon>
    </lineage>
</organism>
<name>EX7S_LATSS</name>
<sequence length="76" mass="8440">MAEKKLTFEENLAQLEVIVNELETGDVPLEKAMTAFQEGVKLSQTLEETLSQAEKTMAKVMADNGEEVPLDAEEQQ</sequence>
<dbReference type="EC" id="3.1.11.6" evidence="1"/>
<dbReference type="EMBL" id="CR936503">
    <property type="protein sequence ID" value="CAI54982.1"/>
    <property type="molecule type" value="Genomic_DNA"/>
</dbReference>
<dbReference type="RefSeq" id="WP_011374387.1">
    <property type="nucleotide sequence ID" value="NC_007576.1"/>
</dbReference>
<dbReference type="SMR" id="Q38XU7"/>
<dbReference type="STRING" id="314315.LCA_0678"/>
<dbReference type="KEGG" id="lsa:LCA_0678"/>
<dbReference type="eggNOG" id="COG1722">
    <property type="taxonomic scope" value="Bacteria"/>
</dbReference>
<dbReference type="HOGENOM" id="CLU_145918_3_2_9"/>
<dbReference type="OrthoDB" id="9798666at2"/>
<dbReference type="Proteomes" id="UP000002707">
    <property type="component" value="Chromosome"/>
</dbReference>
<dbReference type="GO" id="GO:0005829">
    <property type="term" value="C:cytosol"/>
    <property type="evidence" value="ECO:0007669"/>
    <property type="project" value="TreeGrafter"/>
</dbReference>
<dbReference type="GO" id="GO:0009318">
    <property type="term" value="C:exodeoxyribonuclease VII complex"/>
    <property type="evidence" value="ECO:0007669"/>
    <property type="project" value="InterPro"/>
</dbReference>
<dbReference type="GO" id="GO:0008855">
    <property type="term" value="F:exodeoxyribonuclease VII activity"/>
    <property type="evidence" value="ECO:0007669"/>
    <property type="project" value="UniProtKB-UniRule"/>
</dbReference>
<dbReference type="GO" id="GO:0006308">
    <property type="term" value="P:DNA catabolic process"/>
    <property type="evidence" value="ECO:0007669"/>
    <property type="project" value="UniProtKB-UniRule"/>
</dbReference>
<dbReference type="Gene3D" id="1.10.287.1040">
    <property type="entry name" value="Exonuclease VII, small subunit"/>
    <property type="match status" value="1"/>
</dbReference>
<dbReference type="HAMAP" id="MF_00337">
    <property type="entry name" value="Exonuc_7_S"/>
    <property type="match status" value="1"/>
</dbReference>
<dbReference type="InterPro" id="IPR003761">
    <property type="entry name" value="Exonuc_VII_S"/>
</dbReference>
<dbReference type="InterPro" id="IPR037004">
    <property type="entry name" value="Exonuc_VII_ssu_sf"/>
</dbReference>
<dbReference type="NCBIfam" id="NF002138">
    <property type="entry name" value="PRK00977.1-2"/>
    <property type="match status" value="1"/>
</dbReference>
<dbReference type="NCBIfam" id="TIGR01280">
    <property type="entry name" value="xseB"/>
    <property type="match status" value="1"/>
</dbReference>
<dbReference type="PANTHER" id="PTHR34137">
    <property type="entry name" value="EXODEOXYRIBONUCLEASE 7 SMALL SUBUNIT"/>
    <property type="match status" value="1"/>
</dbReference>
<dbReference type="PANTHER" id="PTHR34137:SF1">
    <property type="entry name" value="EXODEOXYRIBONUCLEASE 7 SMALL SUBUNIT"/>
    <property type="match status" value="1"/>
</dbReference>
<dbReference type="Pfam" id="PF02609">
    <property type="entry name" value="Exonuc_VII_S"/>
    <property type="match status" value="1"/>
</dbReference>
<dbReference type="PIRSF" id="PIRSF006488">
    <property type="entry name" value="Exonuc_VII_S"/>
    <property type="match status" value="1"/>
</dbReference>
<dbReference type="SUPFAM" id="SSF116842">
    <property type="entry name" value="XseB-like"/>
    <property type="match status" value="1"/>
</dbReference>
<accession>Q38XU7</accession>
<gene>
    <name evidence="1" type="primary">xseB</name>
    <name type="ordered locus">LCA_0678</name>
</gene>
<keyword id="KW-0963">Cytoplasm</keyword>
<keyword id="KW-0269">Exonuclease</keyword>
<keyword id="KW-0378">Hydrolase</keyword>
<keyword id="KW-0540">Nuclease</keyword>
<keyword id="KW-1185">Reference proteome</keyword>
<protein>
    <recommendedName>
        <fullName evidence="1">Exodeoxyribonuclease 7 small subunit</fullName>
        <ecNumber evidence="1">3.1.11.6</ecNumber>
    </recommendedName>
    <alternativeName>
        <fullName evidence="1">Exodeoxyribonuclease VII small subunit</fullName>
        <shortName evidence="1">Exonuclease VII small subunit</shortName>
    </alternativeName>
</protein>
<reference key="1">
    <citation type="journal article" date="2005" name="Nat. Biotechnol.">
        <title>The complete genome sequence of the meat-borne lactic acid bacterium Lactobacillus sakei 23K.</title>
        <authorList>
            <person name="Chaillou S."/>
            <person name="Champomier-Verges M.-C."/>
            <person name="Cornet M."/>
            <person name="Crutz-Le Coq A.-M."/>
            <person name="Dudez A.-M."/>
            <person name="Martin V."/>
            <person name="Beaufils S."/>
            <person name="Darbon-Rongere E."/>
            <person name="Bossy R."/>
            <person name="Loux V."/>
            <person name="Zagorec M."/>
        </authorList>
    </citation>
    <scope>NUCLEOTIDE SEQUENCE [LARGE SCALE GENOMIC DNA]</scope>
    <source>
        <strain>23K</strain>
    </source>
</reference>